<dbReference type="EC" id="1.13.11.6" evidence="1"/>
<dbReference type="EMBL" id="CU633438">
    <property type="protein sequence ID" value="CAP60107.1"/>
    <property type="molecule type" value="Genomic_DNA"/>
</dbReference>
<dbReference type="EMBL" id="FO904936">
    <property type="protein sequence ID" value="CDP22748.1"/>
    <property type="molecule type" value="Genomic_DNA"/>
</dbReference>
<dbReference type="RefSeq" id="XP_001912625.1">
    <property type="nucleotide sequence ID" value="XM_001912590.1"/>
</dbReference>
<dbReference type="SMR" id="B2AAJ5"/>
<dbReference type="FunCoup" id="B2AAJ5">
    <property type="interactions" value="143"/>
</dbReference>
<dbReference type="STRING" id="515849.B2AAJ5"/>
<dbReference type="GeneID" id="6196987"/>
<dbReference type="KEGG" id="pan:PODANSg09674"/>
<dbReference type="VEuPathDB" id="FungiDB:PODANS_1_4230"/>
<dbReference type="eggNOG" id="KOG3995">
    <property type="taxonomic scope" value="Eukaryota"/>
</dbReference>
<dbReference type="HOGENOM" id="CLU_095765_0_0_1"/>
<dbReference type="InParanoid" id="B2AAJ5"/>
<dbReference type="OrthoDB" id="204928at2759"/>
<dbReference type="UniPathway" id="UPA00253">
    <property type="reaction ID" value="UER00330"/>
</dbReference>
<dbReference type="Proteomes" id="UP000001197">
    <property type="component" value="Chromosome 1"/>
</dbReference>
<dbReference type="GO" id="GO:0005737">
    <property type="term" value="C:cytoplasm"/>
    <property type="evidence" value="ECO:0007669"/>
    <property type="project" value="UniProtKB-SubCell"/>
</dbReference>
<dbReference type="GO" id="GO:0000334">
    <property type="term" value="F:3-hydroxyanthranilate 3,4-dioxygenase activity"/>
    <property type="evidence" value="ECO:0007669"/>
    <property type="project" value="UniProtKB-UniRule"/>
</dbReference>
<dbReference type="GO" id="GO:0008198">
    <property type="term" value="F:ferrous iron binding"/>
    <property type="evidence" value="ECO:0007669"/>
    <property type="project" value="UniProtKB-UniRule"/>
</dbReference>
<dbReference type="GO" id="GO:0034354">
    <property type="term" value="P:'de novo' NAD biosynthetic process from L-tryptophan"/>
    <property type="evidence" value="ECO:0007669"/>
    <property type="project" value="UniProtKB-UniRule"/>
</dbReference>
<dbReference type="GO" id="GO:0043420">
    <property type="term" value="P:anthranilate metabolic process"/>
    <property type="evidence" value="ECO:0007669"/>
    <property type="project" value="UniProtKB-UniRule"/>
</dbReference>
<dbReference type="GO" id="GO:0006569">
    <property type="term" value="P:L-tryptophan catabolic process"/>
    <property type="evidence" value="ECO:0007669"/>
    <property type="project" value="UniProtKB-UniRule"/>
</dbReference>
<dbReference type="GO" id="GO:0019805">
    <property type="term" value="P:quinolinate biosynthetic process"/>
    <property type="evidence" value="ECO:0007669"/>
    <property type="project" value="UniProtKB-UniRule"/>
</dbReference>
<dbReference type="CDD" id="cd06123">
    <property type="entry name" value="cupin_HAO"/>
    <property type="match status" value="1"/>
</dbReference>
<dbReference type="FunFam" id="2.60.120.10:FF:000093">
    <property type="entry name" value="3-hydroxyanthranilate 3,4-dioxygenase"/>
    <property type="match status" value="1"/>
</dbReference>
<dbReference type="Gene3D" id="2.60.120.10">
    <property type="entry name" value="Jelly Rolls"/>
    <property type="match status" value="1"/>
</dbReference>
<dbReference type="HAMAP" id="MF_00825">
    <property type="entry name" value="3_HAO"/>
    <property type="match status" value="1"/>
</dbReference>
<dbReference type="InterPro" id="IPR010329">
    <property type="entry name" value="3hydroanth_dOase"/>
</dbReference>
<dbReference type="InterPro" id="IPR014710">
    <property type="entry name" value="RmlC-like_jellyroll"/>
</dbReference>
<dbReference type="InterPro" id="IPR011051">
    <property type="entry name" value="RmlC_Cupin_sf"/>
</dbReference>
<dbReference type="NCBIfam" id="TIGR03037">
    <property type="entry name" value="anthran_nbaC"/>
    <property type="match status" value="1"/>
</dbReference>
<dbReference type="PANTHER" id="PTHR15497">
    <property type="entry name" value="3-HYDROXYANTHRANILATE 3,4-DIOXYGENASE"/>
    <property type="match status" value="1"/>
</dbReference>
<dbReference type="PANTHER" id="PTHR15497:SF1">
    <property type="entry name" value="3-HYDROXYANTHRANILATE 3,4-DIOXYGENASE"/>
    <property type="match status" value="1"/>
</dbReference>
<dbReference type="Pfam" id="PF06052">
    <property type="entry name" value="3-HAO"/>
    <property type="match status" value="1"/>
</dbReference>
<dbReference type="SUPFAM" id="SSF51182">
    <property type="entry name" value="RmlC-like cupins"/>
    <property type="match status" value="1"/>
</dbReference>
<sequence>MLTQPINLPKWLEENSHLLKPPINNYCVYNEGFTVMIVGGPNARTDYHINQTPEWFYQHRGAMLLKIVDPTDNNTFKDIIIRQGDMFLLPPNTPHNPVRFADTVGIVLEQERPEGSIDRMRWYCQSCKEIVHEASFHCTDLGTQIKAAVEAFKEDEEKRTCKKCGEVAAWKPAEGSLKDPNLEEA</sequence>
<evidence type="ECO:0000255" key="1">
    <source>
        <dbReference type="HAMAP-Rule" id="MF_03019"/>
    </source>
</evidence>
<name>3HAO_PODAN</name>
<protein>
    <recommendedName>
        <fullName evidence="1">3-hydroxyanthranilate 3,4-dioxygenase</fullName>
        <ecNumber evidence="1">1.13.11.6</ecNumber>
    </recommendedName>
    <alternativeName>
        <fullName evidence="1">3-hydroxyanthranilate oxygenase</fullName>
        <shortName evidence="1">3-HAO</shortName>
    </alternativeName>
    <alternativeName>
        <fullName evidence="1">3-hydroxyanthranilic acid dioxygenase</fullName>
        <shortName evidence="1">HAD</shortName>
    </alternativeName>
    <alternativeName>
        <fullName evidence="1">Biosynthesis of nicotinic acid protein 1</fullName>
    </alternativeName>
</protein>
<feature type="chain" id="PRO_0000361994" description="3-hydroxyanthranilate 3,4-dioxygenase">
    <location>
        <begin position="1"/>
        <end position="185"/>
    </location>
</feature>
<feature type="binding site" evidence="1">
    <location>
        <position position="44"/>
    </location>
    <ligand>
        <name>O2</name>
        <dbReference type="ChEBI" id="CHEBI:15379"/>
    </ligand>
</feature>
<feature type="binding site" evidence="1">
    <location>
        <position position="48"/>
    </location>
    <ligand>
        <name>Fe cation</name>
        <dbReference type="ChEBI" id="CHEBI:24875"/>
        <note>catalytic</note>
    </ligand>
</feature>
<feature type="binding site" evidence="1">
    <location>
        <position position="54"/>
    </location>
    <ligand>
        <name>Fe cation</name>
        <dbReference type="ChEBI" id="CHEBI:24875"/>
        <note>catalytic</note>
    </ligand>
</feature>
<feature type="binding site" evidence="1">
    <location>
        <position position="54"/>
    </location>
    <ligand>
        <name>substrate</name>
    </ligand>
</feature>
<feature type="binding site" evidence="1">
    <location>
        <position position="95"/>
    </location>
    <ligand>
        <name>Fe cation</name>
        <dbReference type="ChEBI" id="CHEBI:24875"/>
        <note>catalytic</note>
    </ligand>
</feature>
<feature type="binding site" evidence="1">
    <location>
        <position position="99"/>
    </location>
    <ligand>
        <name>substrate</name>
    </ligand>
</feature>
<feature type="binding site" evidence="1">
    <location>
        <position position="109"/>
    </location>
    <ligand>
        <name>substrate</name>
    </ligand>
</feature>
<feature type="binding site" evidence="1">
    <location>
        <position position="124"/>
    </location>
    <ligand>
        <name>a divalent metal cation</name>
        <dbReference type="ChEBI" id="CHEBI:60240"/>
    </ligand>
</feature>
<feature type="binding site" evidence="1">
    <location>
        <position position="127"/>
    </location>
    <ligand>
        <name>a divalent metal cation</name>
        <dbReference type="ChEBI" id="CHEBI:60240"/>
    </ligand>
</feature>
<feature type="binding site" evidence="1">
    <location>
        <position position="161"/>
    </location>
    <ligand>
        <name>a divalent metal cation</name>
        <dbReference type="ChEBI" id="CHEBI:60240"/>
    </ligand>
</feature>
<feature type="binding site" evidence="1">
    <location>
        <position position="164"/>
    </location>
    <ligand>
        <name>a divalent metal cation</name>
        <dbReference type="ChEBI" id="CHEBI:60240"/>
    </ligand>
</feature>
<keyword id="KW-0963">Cytoplasm</keyword>
<keyword id="KW-0223">Dioxygenase</keyword>
<keyword id="KW-0408">Iron</keyword>
<keyword id="KW-0479">Metal-binding</keyword>
<keyword id="KW-0560">Oxidoreductase</keyword>
<keyword id="KW-0662">Pyridine nucleotide biosynthesis</keyword>
<keyword id="KW-1185">Reference proteome</keyword>
<proteinExistence type="inferred from homology"/>
<gene>
    <name evidence="1" type="primary">BNA1</name>
    <name type="ordered locus">Pa_1_4230</name>
    <name type="ORF">PODANS_1_4230</name>
</gene>
<accession>B2AAJ5</accession>
<accession>A0A090D3R1</accession>
<organism>
    <name type="scientific">Podospora anserina (strain S / ATCC MYA-4624 / DSM 980 / FGSC 10383)</name>
    <name type="common">Pleurage anserina</name>
    <dbReference type="NCBI Taxonomy" id="515849"/>
    <lineage>
        <taxon>Eukaryota</taxon>
        <taxon>Fungi</taxon>
        <taxon>Dikarya</taxon>
        <taxon>Ascomycota</taxon>
        <taxon>Pezizomycotina</taxon>
        <taxon>Sordariomycetes</taxon>
        <taxon>Sordariomycetidae</taxon>
        <taxon>Sordariales</taxon>
        <taxon>Podosporaceae</taxon>
        <taxon>Podospora</taxon>
        <taxon>Podospora anserina</taxon>
    </lineage>
</organism>
<comment type="function">
    <text evidence="1">Catalyzes the oxidative ring opening of 3-hydroxyanthranilate to 2-amino-3-carboxymuconate semialdehyde, which spontaneously cyclizes to quinolinate.</text>
</comment>
<comment type="catalytic activity">
    <reaction evidence="1">
        <text>3-hydroxyanthranilate + O2 = (2Z,4Z)-2-amino-3-carboxymuconate 6-semialdehyde</text>
        <dbReference type="Rhea" id="RHEA:17953"/>
        <dbReference type="ChEBI" id="CHEBI:15379"/>
        <dbReference type="ChEBI" id="CHEBI:36559"/>
        <dbReference type="ChEBI" id="CHEBI:77612"/>
        <dbReference type="EC" id="1.13.11.6"/>
    </reaction>
</comment>
<comment type="cofactor">
    <cofactor evidence="1">
        <name>Fe(2+)</name>
        <dbReference type="ChEBI" id="CHEBI:29033"/>
    </cofactor>
</comment>
<comment type="pathway">
    <text evidence="1">Cofactor biosynthesis; NAD(+) biosynthesis; quinolinate from L-kynurenine: step 3/3.</text>
</comment>
<comment type="subcellular location">
    <subcellularLocation>
        <location evidence="1">Cytoplasm</location>
    </subcellularLocation>
</comment>
<comment type="similarity">
    <text evidence="1">Belongs to the 3-HAO family.</text>
</comment>
<reference key="1">
    <citation type="journal article" date="2008" name="Genome Biol.">
        <title>The genome sequence of the model ascomycete fungus Podospora anserina.</title>
        <authorList>
            <person name="Espagne E."/>
            <person name="Lespinet O."/>
            <person name="Malagnac F."/>
            <person name="Da Silva C."/>
            <person name="Jaillon O."/>
            <person name="Porcel B.M."/>
            <person name="Couloux A."/>
            <person name="Aury J.-M."/>
            <person name="Segurens B."/>
            <person name="Poulain J."/>
            <person name="Anthouard V."/>
            <person name="Grossetete S."/>
            <person name="Khalili H."/>
            <person name="Coppin E."/>
            <person name="Dequard-Chablat M."/>
            <person name="Picard M."/>
            <person name="Contamine V."/>
            <person name="Arnaise S."/>
            <person name="Bourdais A."/>
            <person name="Berteaux-Lecellier V."/>
            <person name="Gautheret D."/>
            <person name="de Vries R.P."/>
            <person name="Battaglia E."/>
            <person name="Coutinho P.M."/>
            <person name="Danchin E.G.J."/>
            <person name="Henrissat B."/>
            <person name="El Khoury R."/>
            <person name="Sainsard-Chanet A."/>
            <person name="Boivin A."/>
            <person name="Pinan-Lucarre B."/>
            <person name="Sellem C.H."/>
            <person name="Debuchy R."/>
            <person name="Wincker P."/>
            <person name="Weissenbach J."/>
            <person name="Silar P."/>
        </authorList>
    </citation>
    <scope>NUCLEOTIDE SEQUENCE [LARGE SCALE GENOMIC DNA]</scope>
    <source>
        <strain>S / ATCC MYA-4624 / DSM 980 / FGSC 10383</strain>
    </source>
</reference>
<reference key="2">
    <citation type="journal article" date="2014" name="Genetics">
        <title>Maintaining two mating types: Structure of the mating type locus and its role in heterokaryosis in Podospora anserina.</title>
        <authorList>
            <person name="Grognet P."/>
            <person name="Bidard F."/>
            <person name="Kuchly C."/>
            <person name="Tong L.C.H."/>
            <person name="Coppin E."/>
            <person name="Benkhali J.A."/>
            <person name="Couloux A."/>
            <person name="Wincker P."/>
            <person name="Debuchy R."/>
            <person name="Silar P."/>
        </authorList>
    </citation>
    <scope>GENOME REANNOTATION</scope>
    <source>
        <strain>S / ATCC MYA-4624 / DSM 980 / FGSC 10383</strain>
    </source>
</reference>